<keyword id="KW-0028">Amino-acid biosynthesis</keyword>
<keyword id="KW-0963">Cytoplasm</keyword>
<keyword id="KW-0413">Isomerase</keyword>
<keyword id="KW-0457">Lysine biosynthesis</keyword>
<keyword id="KW-1185">Reference proteome</keyword>
<evidence type="ECO:0000255" key="1">
    <source>
        <dbReference type="HAMAP-Rule" id="MF_00197"/>
    </source>
</evidence>
<reference key="1">
    <citation type="submission" date="2008-04" db="EMBL/GenBank/DDBJ databases">
        <title>Complete sequence of chromosome of Natranaerobius thermophilus JW/NM-WN-LF.</title>
        <authorList>
            <consortium name="US DOE Joint Genome Institute"/>
            <person name="Copeland A."/>
            <person name="Lucas S."/>
            <person name="Lapidus A."/>
            <person name="Glavina del Rio T."/>
            <person name="Dalin E."/>
            <person name="Tice H."/>
            <person name="Bruce D."/>
            <person name="Goodwin L."/>
            <person name="Pitluck S."/>
            <person name="Chertkov O."/>
            <person name="Brettin T."/>
            <person name="Detter J.C."/>
            <person name="Han C."/>
            <person name="Kuske C.R."/>
            <person name="Schmutz J."/>
            <person name="Larimer F."/>
            <person name="Land M."/>
            <person name="Hauser L."/>
            <person name="Kyrpides N."/>
            <person name="Lykidis A."/>
            <person name="Mesbah N.M."/>
            <person name="Wiegel J."/>
        </authorList>
    </citation>
    <scope>NUCLEOTIDE SEQUENCE [LARGE SCALE GENOMIC DNA]</scope>
    <source>
        <strain>ATCC BAA-1301 / DSM 18059 / JW/NM-WN-LF</strain>
    </source>
</reference>
<organism>
    <name type="scientific">Natranaerobius thermophilus (strain ATCC BAA-1301 / DSM 18059 / JW/NM-WN-LF)</name>
    <dbReference type="NCBI Taxonomy" id="457570"/>
    <lineage>
        <taxon>Bacteria</taxon>
        <taxon>Bacillati</taxon>
        <taxon>Bacillota</taxon>
        <taxon>Clostridia</taxon>
        <taxon>Natranaerobiales</taxon>
        <taxon>Natranaerobiaceae</taxon>
        <taxon>Natranaerobius</taxon>
    </lineage>
</organism>
<dbReference type="EC" id="5.1.1.7" evidence="1"/>
<dbReference type="EMBL" id="CP001034">
    <property type="protein sequence ID" value="ACB85484.1"/>
    <property type="molecule type" value="Genomic_DNA"/>
</dbReference>
<dbReference type="RefSeq" id="WP_012448346.1">
    <property type="nucleotide sequence ID" value="NC_010718.1"/>
</dbReference>
<dbReference type="SMR" id="B2A663"/>
<dbReference type="FunCoup" id="B2A663">
    <property type="interactions" value="437"/>
</dbReference>
<dbReference type="STRING" id="457570.Nther_1913"/>
<dbReference type="KEGG" id="nth:Nther_1913"/>
<dbReference type="eggNOG" id="COG0253">
    <property type="taxonomic scope" value="Bacteria"/>
</dbReference>
<dbReference type="HOGENOM" id="CLU_053306_2_1_9"/>
<dbReference type="InParanoid" id="B2A663"/>
<dbReference type="OrthoDB" id="9805408at2"/>
<dbReference type="UniPathway" id="UPA00034">
    <property type="reaction ID" value="UER00025"/>
</dbReference>
<dbReference type="Proteomes" id="UP000001683">
    <property type="component" value="Chromosome"/>
</dbReference>
<dbReference type="GO" id="GO:0005829">
    <property type="term" value="C:cytosol"/>
    <property type="evidence" value="ECO:0007669"/>
    <property type="project" value="TreeGrafter"/>
</dbReference>
<dbReference type="GO" id="GO:0008837">
    <property type="term" value="F:diaminopimelate epimerase activity"/>
    <property type="evidence" value="ECO:0007669"/>
    <property type="project" value="UniProtKB-UniRule"/>
</dbReference>
<dbReference type="GO" id="GO:0009089">
    <property type="term" value="P:lysine biosynthetic process via diaminopimelate"/>
    <property type="evidence" value="ECO:0007669"/>
    <property type="project" value="UniProtKB-UniRule"/>
</dbReference>
<dbReference type="Gene3D" id="3.10.310.10">
    <property type="entry name" value="Diaminopimelate Epimerase, Chain A, domain 1"/>
    <property type="match status" value="2"/>
</dbReference>
<dbReference type="HAMAP" id="MF_00197">
    <property type="entry name" value="DAP_epimerase"/>
    <property type="match status" value="1"/>
</dbReference>
<dbReference type="InterPro" id="IPR018510">
    <property type="entry name" value="DAP_epimerase_AS"/>
</dbReference>
<dbReference type="InterPro" id="IPR001653">
    <property type="entry name" value="DAP_epimerase_DapF"/>
</dbReference>
<dbReference type="NCBIfam" id="TIGR00652">
    <property type="entry name" value="DapF"/>
    <property type="match status" value="1"/>
</dbReference>
<dbReference type="PANTHER" id="PTHR31689:SF0">
    <property type="entry name" value="DIAMINOPIMELATE EPIMERASE"/>
    <property type="match status" value="1"/>
</dbReference>
<dbReference type="PANTHER" id="PTHR31689">
    <property type="entry name" value="DIAMINOPIMELATE EPIMERASE, CHLOROPLASTIC"/>
    <property type="match status" value="1"/>
</dbReference>
<dbReference type="Pfam" id="PF01678">
    <property type="entry name" value="DAP_epimerase"/>
    <property type="match status" value="2"/>
</dbReference>
<dbReference type="SUPFAM" id="SSF54506">
    <property type="entry name" value="Diaminopimelate epimerase-like"/>
    <property type="match status" value="2"/>
</dbReference>
<dbReference type="PROSITE" id="PS01326">
    <property type="entry name" value="DAP_EPIMERASE"/>
    <property type="match status" value="1"/>
</dbReference>
<gene>
    <name evidence="1" type="primary">dapF</name>
    <name type="ordered locus">Nther_1913</name>
</gene>
<name>DAPF_NATTJ</name>
<comment type="function">
    <text evidence="1">Catalyzes the stereoinversion of LL-2,6-diaminopimelate (L,L-DAP) to meso-diaminopimelate (meso-DAP), a precursor of L-lysine and an essential component of the bacterial peptidoglycan.</text>
</comment>
<comment type="catalytic activity">
    <reaction evidence="1">
        <text>(2S,6S)-2,6-diaminopimelate = meso-2,6-diaminopimelate</text>
        <dbReference type="Rhea" id="RHEA:15393"/>
        <dbReference type="ChEBI" id="CHEBI:57609"/>
        <dbReference type="ChEBI" id="CHEBI:57791"/>
        <dbReference type="EC" id="5.1.1.7"/>
    </reaction>
</comment>
<comment type="pathway">
    <text evidence="1">Amino-acid biosynthesis; L-lysine biosynthesis via DAP pathway; DL-2,6-diaminopimelate from LL-2,6-diaminopimelate: step 1/1.</text>
</comment>
<comment type="subunit">
    <text evidence="1">Homodimer.</text>
</comment>
<comment type="subcellular location">
    <subcellularLocation>
        <location evidence="1">Cytoplasm</location>
    </subcellularLocation>
</comment>
<comment type="similarity">
    <text evidence="1">Belongs to the diaminopimelate epimerase family.</text>
</comment>
<proteinExistence type="inferred from homology"/>
<protein>
    <recommendedName>
        <fullName evidence="1">Diaminopimelate epimerase</fullName>
        <shortName evidence="1">DAP epimerase</shortName>
        <ecNumber evidence="1">5.1.1.7</ecNumber>
    </recommendedName>
    <alternativeName>
        <fullName evidence="1">PLP-independent amino acid racemase</fullName>
    </alternativeName>
</protein>
<feature type="chain" id="PRO_1000099251" description="Diaminopimelate epimerase">
    <location>
        <begin position="1"/>
        <end position="299"/>
    </location>
</feature>
<feature type="active site" description="Proton donor" evidence="1">
    <location>
        <position position="72"/>
    </location>
</feature>
<feature type="active site" description="Proton acceptor" evidence="1">
    <location>
        <position position="238"/>
    </location>
</feature>
<feature type="binding site" evidence="1">
    <location>
        <position position="11"/>
    </location>
    <ligand>
        <name>substrate</name>
    </ligand>
</feature>
<feature type="binding site" evidence="1">
    <location>
        <position position="63"/>
    </location>
    <ligand>
        <name>substrate</name>
    </ligand>
</feature>
<feature type="binding site" evidence="1">
    <location>
        <begin position="73"/>
        <end position="74"/>
    </location>
    <ligand>
        <name>substrate</name>
    </ligand>
</feature>
<feature type="binding site" evidence="1">
    <location>
        <position position="211"/>
    </location>
    <ligand>
        <name>substrate</name>
    </ligand>
</feature>
<feature type="binding site" evidence="1">
    <location>
        <begin position="229"/>
        <end position="230"/>
    </location>
    <ligand>
        <name>substrate</name>
    </ligand>
</feature>
<feature type="binding site" evidence="1">
    <location>
        <begin position="239"/>
        <end position="240"/>
    </location>
    <ligand>
        <name>substrate</name>
    </ligand>
</feature>
<feature type="site" description="Could be important to modulate the pK values of the two catalytic cysteine residues" evidence="1">
    <location>
        <position position="179"/>
    </location>
</feature>
<feature type="site" description="Could be important to modulate the pK values of the two catalytic cysteine residues" evidence="1">
    <location>
        <position position="229"/>
    </location>
</feature>
<sequence length="299" mass="33320">MKFEKMHGLGNDFILMKDFQRNYPDLAKRLCDRRFGIGADGLVIYSSCKNSNINADYQMRIYNSDGSEAEMCGNAIRCLAKYLAKTEETDGKRLAIATTAGIKRVEIVENFDLMGEINLSGMVGSQEQLVKVNMEKPLLKSSDIPLAVKNDRNDIARQRPIDTPYGIYYLTEVSTGPPHAVIFVQNLLPEEQLLELGPIIEKHDLFPYGTNVEFVKVESSNHLRVQVWERGAGKTLACGTGACAVVVAATINGFCNGMAYVELPGGKLFINWDNNTEELYMIGPAEHVYSGELNNQIFY</sequence>
<accession>B2A663</accession>